<evidence type="ECO:0000255" key="1">
    <source>
        <dbReference type="HAMAP-Rule" id="MF_00281"/>
    </source>
</evidence>
<sequence>MSHLAELVASAKAAISQASDVAALDNVRVEYLGKKGHLTLQMTTLRELPPEERPAAGAVINEAKEQVQQALNARKAELESAALNARLAAETIDVSLPGRRIENGGLHPVTRTIDRIESFFGELGFTVATGPEIEDDYHNFDALNIPGHHPARADHDTFWFDTTRLLRTQTSGVQIRTMKAQQPPIRIIAPGRVYRNDYDQTHTPMFHQMEGLIVDTNISFTNLKGTLHDFLRNFFEEDLQIRFRPSYFPFTEPSAEVDVMGKNGKWLEVLGCGMVHPNVLRNVGIDPEVYSGFAFGMGMERLTMLRYGVTDLRSFFENDLRFLKQFK</sequence>
<reference key="1">
    <citation type="journal article" date="2008" name="J. Bacteriol.">
        <title>The pangenome structure of Escherichia coli: comparative genomic analysis of E. coli commensal and pathogenic isolates.</title>
        <authorList>
            <person name="Rasko D.A."/>
            <person name="Rosovitz M.J."/>
            <person name="Myers G.S.A."/>
            <person name="Mongodin E.F."/>
            <person name="Fricke W.F."/>
            <person name="Gajer P."/>
            <person name="Crabtree J."/>
            <person name="Sebaihia M."/>
            <person name="Thomson N.R."/>
            <person name="Chaudhuri R."/>
            <person name="Henderson I.R."/>
            <person name="Sperandio V."/>
            <person name="Ravel J."/>
        </authorList>
    </citation>
    <scope>NUCLEOTIDE SEQUENCE [LARGE SCALE GENOMIC DNA]</scope>
    <source>
        <strain>E24377A / ETEC</strain>
    </source>
</reference>
<accession>A7ZMI2</accession>
<proteinExistence type="inferred from homology"/>
<name>SYFA_ECO24</name>
<organism>
    <name type="scientific">Escherichia coli O139:H28 (strain E24377A / ETEC)</name>
    <dbReference type="NCBI Taxonomy" id="331111"/>
    <lineage>
        <taxon>Bacteria</taxon>
        <taxon>Pseudomonadati</taxon>
        <taxon>Pseudomonadota</taxon>
        <taxon>Gammaproteobacteria</taxon>
        <taxon>Enterobacterales</taxon>
        <taxon>Enterobacteriaceae</taxon>
        <taxon>Escherichia</taxon>
    </lineage>
</organism>
<feature type="chain" id="PRO_1000059237" description="Phenylalanine--tRNA ligase alpha subunit">
    <location>
        <begin position="1"/>
        <end position="327"/>
    </location>
</feature>
<feature type="binding site" evidence="1">
    <location>
        <position position="252"/>
    </location>
    <ligand>
        <name>Mg(2+)</name>
        <dbReference type="ChEBI" id="CHEBI:18420"/>
        <note>shared with beta subunit</note>
    </ligand>
</feature>
<gene>
    <name evidence="1" type="primary">pheS</name>
    <name type="ordered locus">EcE24377A_1933</name>
</gene>
<keyword id="KW-0030">Aminoacyl-tRNA synthetase</keyword>
<keyword id="KW-0067">ATP-binding</keyword>
<keyword id="KW-0963">Cytoplasm</keyword>
<keyword id="KW-0436">Ligase</keyword>
<keyword id="KW-0460">Magnesium</keyword>
<keyword id="KW-0479">Metal-binding</keyword>
<keyword id="KW-0547">Nucleotide-binding</keyword>
<keyword id="KW-0648">Protein biosynthesis</keyword>
<keyword id="KW-1185">Reference proteome</keyword>
<comment type="catalytic activity">
    <reaction evidence="1">
        <text>tRNA(Phe) + L-phenylalanine + ATP = L-phenylalanyl-tRNA(Phe) + AMP + diphosphate + H(+)</text>
        <dbReference type="Rhea" id="RHEA:19413"/>
        <dbReference type="Rhea" id="RHEA-COMP:9668"/>
        <dbReference type="Rhea" id="RHEA-COMP:9699"/>
        <dbReference type="ChEBI" id="CHEBI:15378"/>
        <dbReference type="ChEBI" id="CHEBI:30616"/>
        <dbReference type="ChEBI" id="CHEBI:33019"/>
        <dbReference type="ChEBI" id="CHEBI:58095"/>
        <dbReference type="ChEBI" id="CHEBI:78442"/>
        <dbReference type="ChEBI" id="CHEBI:78531"/>
        <dbReference type="ChEBI" id="CHEBI:456215"/>
        <dbReference type="EC" id="6.1.1.20"/>
    </reaction>
</comment>
<comment type="cofactor">
    <cofactor evidence="1">
        <name>Mg(2+)</name>
        <dbReference type="ChEBI" id="CHEBI:18420"/>
    </cofactor>
    <text evidence="1">Binds 2 magnesium ions per tetramer.</text>
</comment>
<comment type="subunit">
    <text evidence="1">Tetramer of two alpha and two beta subunits.</text>
</comment>
<comment type="subcellular location">
    <subcellularLocation>
        <location evidence="1">Cytoplasm</location>
    </subcellularLocation>
</comment>
<comment type="similarity">
    <text evidence="1">Belongs to the class-II aminoacyl-tRNA synthetase family. Phe-tRNA synthetase alpha subunit type 1 subfamily.</text>
</comment>
<protein>
    <recommendedName>
        <fullName evidence="1">Phenylalanine--tRNA ligase alpha subunit</fullName>
        <ecNumber evidence="1">6.1.1.20</ecNumber>
    </recommendedName>
    <alternativeName>
        <fullName evidence="1">Phenylalanyl-tRNA synthetase alpha subunit</fullName>
        <shortName evidence="1">PheRS</shortName>
    </alternativeName>
</protein>
<dbReference type="EC" id="6.1.1.20" evidence="1"/>
<dbReference type="EMBL" id="CP000800">
    <property type="protein sequence ID" value="ABV20693.1"/>
    <property type="molecule type" value="Genomic_DNA"/>
</dbReference>
<dbReference type="RefSeq" id="WP_000018596.1">
    <property type="nucleotide sequence ID" value="NC_009801.1"/>
</dbReference>
<dbReference type="SMR" id="A7ZMI2"/>
<dbReference type="GeneID" id="75205640"/>
<dbReference type="KEGG" id="ecw:EcE24377A_1933"/>
<dbReference type="HOGENOM" id="CLU_025086_0_1_6"/>
<dbReference type="Proteomes" id="UP000001122">
    <property type="component" value="Chromosome"/>
</dbReference>
<dbReference type="GO" id="GO:0005737">
    <property type="term" value="C:cytoplasm"/>
    <property type="evidence" value="ECO:0007669"/>
    <property type="project" value="UniProtKB-SubCell"/>
</dbReference>
<dbReference type="GO" id="GO:0005524">
    <property type="term" value="F:ATP binding"/>
    <property type="evidence" value="ECO:0007669"/>
    <property type="project" value="UniProtKB-UniRule"/>
</dbReference>
<dbReference type="GO" id="GO:0000287">
    <property type="term" value="F:magnesium ion binding"/>
    <property type="evidence" value="ECO:0007669"/>
    <property type="project" value="UniProtKB-UniRule"/>
</dbReference>
<dbReference type="GO" id="GO:0004826">
    <property type="term" value="F:phenylalanine-tRNA ligase activity"/>
    <property type="evidence" value="ECO:0007669"/>
    <property type="project" value="UniProtKB-UniRule"/>
</dbReference>
<dbReference type="GO" id="GO:0000049">
    <property type="term" value="F:tRNA binding"/>
    <property type="evidence" value="ECO:0007669"/>
    <property type="project" value="InterPro"/>
</dbReference>
<dbReference type="GO" id="GO:0006432">
    <property type="term" value="P:phenylalanyl-tRNA aminoacylation"/>
    <property type="evidence" value="ECO:0007669"/>
    <property type="project" value="UniProtKB-UniRule"/>
</dbReference>
<dbReference type="CDD" id="cd00496">
    <property type="entry name" value="PheRS_alpha_core"/>
    <property type="match status" value="1"/>
</dbReference>
<dbReference type="FunFam" id="3.30.930.10:FF:000003">
    <property type="entry name" value="Phenylalanine--tRNA ligase alpha subunit"/>
    <property type="match status" value="1"/>
</dbReference>
<dbReference type="Gene3D" id="3.30.930.10">
    <property type="entry name" value="Bira Bifunctional Protein, Domain 2"/>
    <property type="match status" value="1"/>
</dbReference>
<dbReference type="HAMAP" id="MF_00281">
    <property type="entry name" value="Phe_tRNA_synth_alpha1"/>
    <property type="match status" value="1"/>
</dbReference>
<dbReference type="InterPro" id="IPR006195">
    <property type="entry name" value="aa-tRNA-synth_II"/>
</dbReference>
<dbReference type="InterPro" id="IPR045864">
    <property type="entry name" value="aa-tRNA-synth_II/BPL/LPL"/>
</dbReference>
<dbReference type="InterPro" id="IPR004529">
    <property type="entry name" value="Phe-tRNA-synth_IIc_asu"/>
</dbReference>
<dbReference type="InterPro" id="IPR004188">
    <property type="entry name" value="Phe-tRNA_ligase_II_N"/>
</dbReference>
<dbReference type="InterPro" id="IPR022911">
    <property type="entry name" value="Phe_tRNA_ligase_alpha1_bac"/>
</dbReference>
<dbReference type="InterPro" id="IPR002319">
    <property type="entry name" value="Phenylalanyl-tRNA_Synthase"/>
</dbReference>
<dbReference type="InterPro" id="IPR010978">
    <property type="entry name" value="tRNA-bd_arm"/>
</dbReference>
<dbReference type="NCBIfam" id="TIGR00468">
    <property type="entry name" value="pheS"/>
    <property type="match status" value="1"/>
</dbReference>
<dbReference type="PANTHER" id="PTHR11538:SF41">
    <property type="entry name" value="PHENYLALANINE--TRNA LIGASE, MITOCHONDRIAL"/>
    <property type="match status" value="1"/>
</dbReference>
<dbReference type="PANTHER" id="PTHR11538">
    <property type="entry name" value="PHENYLALANYL-TRNA SYNTHETASE"/>
    <property type="match status" value="1"/>
</dbReference>
<dbReference type="Pfam" id="PF02912">
    <property type="entry name" value="Phe_tRNA-synt_N"/>
    <property type="match status" value="1"/>
</dbReference>
<dbReference type="Pfam" id="PF01409">
    <property type="entry name" value="tRNA-synt_2d"/>
    <property type="match status" value="1"/>
</dbReference>
<dbReference type="SUPFAM" id="SSF55681">
    <property type="entry name" value="Class II aaRS and biotin synthetases"/>
    <property type="match status" value="1"/>
</dbReference>
<dbReference type="SUPFAM" id="SSF46589">
    <property type="entry name" value="tRNA-binding arm"/>
    <property type="match status" value="1"/>
</dbReference>
<dbReference type="PROSITE" id="PS50862">
    <property type="entry name" value="AA_TRNA_LIGASE_II"/>
    <property type="match status" value="1"/>
</dbReference>